<evidence type="ECO:0000255" key="1">
    <source>
        <dbReference type="HAMAP-Rule" id="MF_00817"/>
    </source>
</evidence>
<protein>
    <recommendedName>
        <fullName evidence="1">NADPH-dependent 7-cyano-7-deazaguanine reductase</fullName>
        <ecNumber evidence="1">1.7.1.13</ecNumber>
    </recommendedName>
    <alternativeName>
        <fullName evidence="1">7-cyano-7-carbaguanine reductase</fullName>
    </alternativeName>
    <alternativeName>
        <fullName evidence="1">NADPH-dependent nitrile oxidoreductase</fullName>
    </alternativeName>
    <alternativeName>
        <fullName evidence="1">PreQ(0) reductase</fullName>
    </alternativeName>
</protein>
<accession>Q57KE9</accession>
<gene>
    <name evidence="1" type="primary">queF</name>
    <name type="ordered locus">SCH_2907</name>
</gene>
<name>QUEF_SALCH</name>
<sequence>MSSYENHQALDGLTLGKSTDYRDNYDASLLQGVPRSLNRDPLGLTADNLPFHGADIWTLYELSWLNSQGLPQVAVGHVELDYTSVNLIESKSFKLYLNSFNQTRFDTWETVRQTLERDLRACAQGNVSVRLHRLDELEGQPVAHFHGTCIDDQDISIDNYQFTTDYLQHAVSGEKQVEETLVSHLLKSNCLITHQPDWGSIQIQYRGRKIDREKLLRYLVSFRHHNEFHEQCVERIFNDILRFCQPETLSVYARYTRRGGLDINPWRSNTDFVPATGRLARQ</sequence>
<proteinExistence type="inferred from homology"/>
<dbReference type="EC" id="1.7.1.13" evidence="1"/>
<dbReference type="EMBL" id="AE017220">
    <property type="protein sequence ID" value="AAX66813.1"/>
    <property type="molecule type" value="Genomic_DNA"/>
</dbReference>
<dbReference type="RefSeq" id="WP_000100463.1">
    <property type="nucleotide sequence ID" value="NC_006905.1"/>
</dbReference>
<dbReference type="SMR" id="Q57KE9"/>
<dbReference type="KEGG" id="sec:SCH_2907"/>
<dbReference type="HOGENOM" id="CLU_054738_0_0_6"/>
<dbReference type="UniPathway" id="UPA00392"/>
<dbReference type="Proteomes" id="UP000000538">
    <property type="component" value="Chromosome"/>
</dbReference>
<dbReference type="GO" id="GO:0005737">
    <property type="term" value="C:cytoplasm"/>
    <property type="evidence" value="ECO:0007669"/>
    <property type="project" value="UniProtKB-SubCell"/>
</dbReference>
<dbReference type="GO" id="GO:0033739">
    <property type="term" value="F:preQ1 synthase activity"/>
    <property type="evidence" value="ECO:0007669"/>
    <property type="project" value="UniProtKB-UniRule"/>
</dbReference>
<dbReference type="GO" id="GO:0008616">
    <property type="term" value="P:queuosine biosynthetic process"/>
    <property type="evidence" value="ECO:0007669"/>
    <property type="project" value="UniProtKB-UniRule"/>
</dbReference>
<dbReference type="GO" id="GO:0006400">
    <property type="term" value="P:tRNA modification"/>
    <property type="evidence" value="ECO:0007669"/>
    <property type="project" value="UniProtKB-UniRule"/>
</dbReference>
<dbReference type="FunFam" id="3.30.1130.10:FF:000004">
    <property type="entry name" value="NADPH-dependent 7-cyano-7-deazaguanine reductase"/>
    <property type="match status" value="1"/>
</dbReference>
<dbReference type="Gene3D" id="3.30.1130.10">
    <property type="match status" value="2"/>
</dbReference>
<dbReference type="HAMAP" id="MF_00817">
    <property type="entry name" value="QueF_type2"/>
    <property type="match status" value="1"/>
</dbReference>
<dbReference type="InterPro" id="IPR043133">
    <property type="entry name" value="GTP-CH-I_C/QueF"/>
</dbReference>
<dbReference type="InterPro" id="IPR050084">
    <property type="entry name" value="NADPH_dep_7-cyano-7-deazaG_red"/>
</dbReference>
<dbReference type="InterPro" id="IPR029500">
    <property type="entry name" value="QueF"/>
</dbReference>
<dbReference type="InterPro" id="IPR029139">
    <property type="entry name" value="QueF_N"/>
</dbReference>
<dbReference type="InterPro" id="IPR016428">
    <property type="entry name" value="QueF_type2"/>
</dbReference>
<dbReference type="NCBIfam" id="TIGR03138">
    <property type="entry name" value="QueF"/>
    <property type="match status" value="1"/>
</dbReference>
<dbReference type="PANTHER" id="PTHR34354">
    <property type="entry name" value="NADPH-DEPENDENT 7-CYANO-7-DEAZAGUANINE REDUCTASE"/>
    <property type="match status" value="1"/>
</dbReference>
<dbReference type="PANTHER" id="PTHR34354:SF1">
    <property type="entry name" value="NADPH-DEPENDENT 7-CYANO-7-DEAZAGUANINE REDUCTASE"/>
    <property type="match status" value="1"/>
</dbReference>
<dbReference type="Pfam" id="PF14489">
    <property type="entry name" value="QueF"/>
    <property type="match status" value="1"/>
</dbReference>
<dbReference type="Pfam" id="PF14819">
    <property type="entry name" value="QueF_N"/>
    <property type="match status" value="1"/>
</dbReference>
<dbReference type="PIRSF" id="PIRSF004750">
    <property type="entry name" value="Nitrile_oxidored_YqcD_prd"/>
    <property type="match status" value="1"/>
</dbReference>
<dbReference type="SUPFAM" id="SSF55620">
    <property type="entry name" value="Tetrahydrobiopterin biosynthesis enzymes-like"/>
    <property type="match status" value="1"/>
</dbReference>
<reference key="1">
    <citation type="journal article" date="2005" name="Nucleic Acids Res.">
        <title>The genome sequence of Salmonella enterica serovar Choleraesuis, a highly invasive and resistant zoonotic pathogen.</title>
        <authorList>
            <person name="Chiu C.-H."/>
            <person name="Tang P."/>
            <person name="Chu C."/>
            <person name="Hu S."/>
            <person name="Bao Q."/>
            <person name="Yu J."/>
            <person name="Chou Y.-Y."/>
            <person name="Wang H.-S."/>
            <person name="Lee Y.-S."/>
        </authorList>
    </citation>
    <scope>NUCLEOTIDE SEQUENCE [LARGE SCALE GENOMIC DNA]</scope>
    <source>
        <strain>SC-B67</strain>
    </source>
</reference>
<feature type="chain" id="PRO_0000163056" description="NADPH-dependent 7-cyano-7-deazaguanine reductase">
    <location>
        <begin position="1"/>
        <end position="282"/>
    </location>
</feature>
<feature type="active site" description="Thioimide intermediate" evidence="1">
    <location>
        <position position="190"/>
    </location>
</feature>
<feature type="active site" description="Proton donor" evidence="1">
    <location>
        <position position="197"/>
    </location>
</feature>
<feature type="binding site" evidence="1">
    <location>
        <begin position="88"/>
        <end position="90"/>
    </location>
    <ligand>
        <name>substrate</name>
    </ligand>
</feature>
<feature type="binding site" evidence="1">
    <location>
        <begin position="90"/>
        <end position="91"/>
    </location>
    <ligand>
        <name>NADPH</name>
        <dbReference type="ChEBI" id="CHEBI:57783"/>
    </ligand>
</feature>
<feature type="binding site" evidence="1">
    <location>
        <begin position="229"/>
        <end position="230"/>
    </location>
    <ligand>
        <name>substrate</name>
    </ligand>
</feature>
<feature type="binding site" evidence="1">
    <location>
        <begin position="258"/>
        <end position="259"/>
    </location>
    <ligand>
        <name>NADPH</name>
        <dbReference type="ChEBI" id="CHEBI:57783"/>
    </ligand>
</feature>
<comment type="function">
    <text evidence="1">Catalyzes the NADPH-dependent reduction of 7-cyano-7-deazaguanine (preQ0) to 7-aminomethyl-7-deazaguanine (preQ1).</text>
</comment>
<comment type="catalytic activity">
    <reaction evidence="1">
        <text>7-aminomethyl-7-carbaguanine + 2 NADP(+) = 7-cyano-7-deazaguanine + 2 NADPH + 3 H(+)</text>
        <dbReference type="Rhea" id="RHEA:13409"/>
        <dbReference type="ChEBI" id="CHEBI:15378"/>
        <dbReference type="ChEBI" id="CHEBI:45075"/>
        <dbReference type="ChEBI" id="CHEBI:57783"/>
        <dbReference type="ChEBI" id="CHEBI:58349"/>
        <dbReference type="ChEBI" id="CHEBI:58703"/>
        <dbReference type="EC" id="1.7.1.13"/>
    </reaction>
</comment>
<comment type="pathway">
    <text evidence="1">tRNA modification; tRNA-queuosine biosynthesis.</text>
</comment>
<comment type="subunit">
    <text evidence="1">Homodimer.</text>
</comment>
<comment type="subcellular location">
    <subcellularLocation>
        <location evidence="1">Cytoplasm</location>
    </subcellularLocation>
</comment>
<comment type="similarity">
    <text evidence="1">Belongs to the GTP cyclohydrolase I family. QueF type 2 subfamily.</text>
</comment>
<keyword id="KW-0963">Cytoplasm</keyword>
<keyword id="KW-0521">NADP</keyword>
<keyword id="KW-0560">Oxidoreductase</keyword>
<keyword id="KW-0671">Queuosine biosynthesis</keyword>
<organism>
    <name type="scientific">Salmonella choleraesuis (strain SC-B67)</name>
    <dbReference type="NCBI Taxonomy" id="321314"/>
    <lineage>
        <taxon>Bacteria</taxon>
        <taxon>Pseudomonadati</taxon>
        <taxon>Pseudomonadota</taxon>
        <taxon>Gammaproteobacteria</taxon>
        <taxon>Enterobacterales</taxon>
        <taxon>Enterobacteriaceae</taxon>
        <taxon>Salmonella</taxon>
    </lineage>
</organism>